<evidence type="ECO:0000255" key="1">
    <source>
        <dbReference type="HAMAP-Rule" id="MF_00651"/>
    </source>
</evidence>
<feature type="chain" id="PRO_1000131007" description="Putative pre-16S rRNA nuclease">
    <location>
        <begin position="1"/>
        <end position="149"/>
    </location>
</feature>
<sequence>MSGTSARDATLLAFDYGEKRIGVAIGNALTRSARALVVIPNLNREHRFKAVGELLAEWRPDALVVGLPMHPDGTPHDMTQQAKRFGNQLNGRFGLPVTWVDERYSSVEAEAGMRERNVRGRARTDMLDAEAARVILQQYLDQLSDHEPH</sequence>
<dbReference type="EC" id="3.1.-.-" evidence="1"/>
<dbReference type="EMBL" id="CP000868">
    <property type="protein sequence ID" value="ABX16207.1"/>
    <property type="molecule type" value="Genomic_DNA"/>
</dbReference>
<dbReference type="EMBL" id="AP009385">
    <property type="protein sequence ID" value="BAG42678.1"/>
    <property type="molecule type" value="Genomic_DNA"/>
</dbReference>
<dbReference type="RefSeq" id="WP_006412024.1">
    <property type="nucleotide sequence ID" value="NC_010084.1"/>
</dbReference>
<dbReference type="SMR" id="A9AFI6"/>
<dbReference type="STRING" id="395019.BMULJ_00715"/>
<dbReference type="KEGG" id="bmj:BMULJ_00715"/>
<dbReference type="KEGG" id="bmu:Bmul_2523"/>
<dbReference type="eggNOG" id="COG0816">
    <property type="taxonomic scope" value="Bacteria"/>
</dbReference>
<dbReference type="HOGENOM" id="CLU_098240_3_0_4"/>
<dbReference type="Proteomes" id="UP000008815">
    <property type="component" value="Chromosome 1"/>
</dbReference>
<dbReference type="GO" id="GO:0005829">
    <property type="term" value="C:cytosol"/>
    <property type="evidence" value="ECO:0007669"/>
    <property type="project" value="TreeGrafter"/>
</dbReference>
<dbReference type="GO" id="GO:0004518">
    <property type="term" value="F:nuclease activity"/>
    <property type="evidence" value="ECO:0007669"/>
    <property type="project" value="UniProtKB-KW"/>
</dbReference>
<dbReference type="GO" id="GO:0000967">
    <property type="term" value="P:rRNA 5'-end processing"/>
    <property type="evidence" value="ECO:0007669"/>
    <property type="project" value="UniProtKB-UniRule"/>
</dbReference>
<dbReference type="CDD" id="cd16964">
    <property type="entry name" value="YqgF"/>
    <property type="match status" value="1"/>
</dbReference>
<dbReference type="Gene3D" id="3.30.420.140">
    <property type="entry name" value="YqgF/RNase H-like domain"/>
    <property type="match status" value="1"/>
</dbReference>
<dbReference type="HAMAP" id="MF_00651">
    <property type="entry name" value="Nuclease_YqgF"/>
    <property type="match status" value="1"/>
</dbReference>
<dbReference type="InterPro" id="IPR012337">
    <property type="entry name" value="RNaseH-like_sf"/>
</dbReference>
<dbReference type="InterPro" id="IPR005227">
    <property type="entry name" value="YqgF"/>
</dbReference>
<dbReference type="InterPro" id="IPR006641">
    <property type="entry name" value="YqgF/RNaseH-like_dom"/>
</dbReference>
<dbReference type="InterPro" id="IPR037027">
    <property type="entry name" value="YqgF/RNaseH-like_dom_sf"/>
</dbReference>
<dbReference type="NCBIfam" id="TIGR00250">
    <property type="entry name" value="RNAse_H_YqgF"/>
    <property type="match status" value="1"/>
</dbReference>
<dbReference type="PANTHER" id="PTHR33317">
    <property type="entry name" value="POLYNUCLEOTIDYL TRANSFERASE, RIBONUCLEASE H-LIKE SUPERFAMILY PROTEIN"/>
    <property type="match status" value="1"/>
</dbReference>
<dbReference type="PANTHER" id="PTHR33317:SF4">
    <property type="entry name" value="POLYNUCLEOTIDYL TRANSFERASE, RIBONUCLEASE H-LIKE SUPERFAMILY PROTEIN"/>
    <property type="match status" value="1"/>
</dbReference>
<dbReference type="Pfam" id="PF03652">
    <property type="entry name" value="RuvX"/>
    <property type="match status" value="1"/>
</dbReference>
<dbReference type="SMART" id="SM00732">
    <property type="entry name" value="YqgFc"/>
    <property type="match status" value="1"/>
</dbReference>
<dbReference type="SUPFAM" id="SSF53098">
    <property type="entry name" value="Ribonuclease H-like"/>
    <property type="match status" value="1"/>
</dbReference>
<accession>A9AFI6</accession>
<reference key="1">
    <citation type="submission" date="2007-10" db="EMBL/GenBank/DDBJ databases">
        <title>Complete sequence of chromosome 1 of Burkholderia multivorans ATCC 17616.</title>
        <authorList>
            <person name="Copeland A."/>
            <person name="Lucas S."/>
            <person name="Lapidus A."/>
            <person name="Barry K."/>
            <person name="Glavina del Rio T."/>
            <person name="Dalin E."/>
            <person name="Tice H."/>
            <person name="Pitluck S."/>
            <person name="Chain P."/>
            <person name="Malfatti S."/>
            <person name="Shin M."/>
            <person name="Vergez L."/>
            <person name="Schmutz J."/>
            <person name="Larimer F."/>
            <person name="Land M."/>
            <person name="Hauser L."/>
            <person name="Kyrpides N."/>
            <person name="Kim E."/>
            <person name="Tiedje J."/>
            <person name="Richardson P."/>
        </authorList>
    </citation>
    <scope>NUCLEOTIDE SEQUENCE [LARGE SCALE GENOMIC DNA]</scope>
    <source>
        <strain>ATCC 17616 / 249</strain>
    </source>
</reference>
<reference key="2">
    <citation type="submission" date="2007-04" db="EMBL/GenBank/DDBJ databases">
        <title>Complete genome sequence of Burkholderia multivorans ATCC 17616.</title>
        <authorList>
            <person name="Ohtsubo Y."/>
            <person name="Yamashita A."/>
            <person name="Kurokawa K."/>
            <person name="Takami H."/>
            <person name="Yuhara S."/>
            <person name="Nishiyama E."/>
            <person name="Endo R."/>
            <person name="Miyazaki R."/>
            <person name="Ono A."/>
            <person name="Yano K."/>
            <person name="Ito M."/>
            <person name="Sota M."/>
            <person name="Yuji N."/>
            <person name="Hattori M."/>
            <person name="Tsuda M."/>
        </authorList>
    </citation>
    <scope>NUCLEOTIDE SEQUENCE [LARGE SCALE GENOMIC DNA]</scope>
    <source>
        <strain>ATCC 17616 / 249</strain>
    </source>
</reference>
<protein>
    <recommendedName>
        <fullName evidence="1">Putative pre-16S rRNA nuclease</fullName>
        <ecNumber evidence="1">3.1.-.-</ecNumber>
    </recommendedName>
</protein>
<gene>
    <name type="ordered locus">Bmul_2523</name>
    <name type="ordered locus">BMULJ_00715</name>
</gene>
<name>YQGF_BURM1</name>
<keyword id="KW-0963">Cytoplasm</keyword>
<keyword id="KW-0378">Hydrolase</keyword>
<keyword id="KW-0540">Nuclease</keyword>
<keyword id="KW-1185">Reference proteome</keyword>
<keyword id="KW-0690">Ribosome biogenesis</keyword>
<comment type="function">
    <text evidence="1">Could be a nuclease involved in processing of the 5'-end of pre-16S rRNA.</text>
</comment>
<comment type="subcellular location">
    <subcellularLocation>
        <location evidence="1">Cytoplasm</location>
    </subcellularLocation>
</comment>
<comment type="similarity">
    <text evidence="1">Belongs to the YqgF nuclease family.</text>
</comment>
<organism>
    <name type="scientific">Burkholderia multivorans (strain ATCC 17616 / 249)</name>
    <dbReference type="NCBI Taxonomy" id="395019"/>
    <lineage>
        <taxon>Bacteria</taxon>
        <taxon>Pseudomonadati</taxon>
        <taxon>Pseudomonadota</taxon>
        <taxon>Betaproteobacteria</taxon>
        <taxon>Burkholderiales</taxon>
        <taxon>Burkholderiaceae</taxon>
        <taxon>Burkholderia</taxon>
        <taxon>Burkholderia cepacia complex</taxon>
    </lineage>
</organism>
<proteinExistence type="inferred from homology"/>